<accession>P33727</accession>
<feature type="signal peptide" evidence="6">
    <location>
        <begin position="1"/>
        <end position="41"/>
    </location>
</feature>
<feature type="chain" id="PRO_0000033422" description="Arylsulfatase B">
    <location>
        <begin position="42"/>
        <end position="535"/>
    </location>
</feature>
<feature type="active site" description="Nucleophile" evidence="2">
    <location>
        <position position="93"/>
    </location>
</feature>
<feature type="active site" evidence="2">
    <location>
        <position position="149"/>
    </location>
</feature>
<feature type="binding site" evidence="1">
    <location>
        <position position="55"/>
    </location>
    <ligand>
        <name>Ca(2+)</name>
        <dbReference type="ChEBI" id="CHEBI:29108"/>
    </ligand>
</feature>
<feature type="binding site" evidence="1">
    <location>
        <position position="56"/>
    </location>
    <ligand>
        <name>Ca(2+)</name>
        <dbReference type="ChEBI" id="CHEBI:29108"/>
    </ligand>
</feature>
<feature type="binding site" description="via 3-oxoalanine" evidence="1">
    <location>
        <position position="93"/>
    </location>
    <ligand>
        <name>Ca(2+)</name>
        <dbReference type="ChEBI" id="CHEBI:29108"/>
    </ligand>
</feature>
<feature type="binding site" evidence="1">
    <location>
        <position position="147"/>
    </location>
    <ligand>
        <name>substrate</name>
    </ligand>
</feature>
<feature type="binding site" evidence="1">
    <location>
        <position position="244"/>
    </location>
    <ligand>
        <name>substrate</name>
    </ligand>
</feature>
<feature type="binding site" evidence="1">
    <location>
        <position position="302"/>
    </location>
    <ligand>
        <name>Ca(2+)</name>
        <dbReference type="ChEBI" id="CHEBI:29108"/>
    </ligand>
</feature>
<feature type="binding site" evidence="1">
    <location>
        <position position="303"/>
    </location>
    <ligand>
        <name>Ca(2+)</name>
        <dbReference type="ChEBI" id="CHEBI:29108"/>
    </ligand>
</feature>
<feature type="binding site" evidence="1">
    <location>
        <position position="320"/>
    </location>
    <ligand>
        <name>substrate</name>
    </ligand>
</feature>
<feature type="modified residue" description="3-oxoalanine (Cys)" evidence="2">
    <location>
        <position position="93"/>
    </location>
</feature>
<feature type="glycosylation site" description="N-linked (GlcNAc...) asparagine" evidence="6">
    <location>
        <position position="190"/>
    </location>
</feature>
<feature type="glycosylation site" description="N-linked (GlcNAc...) asparagine" evidence="6">
    <location>
        <position position="281"/>
    </location>
</feature>
<feature type="glycosylation site" description="N-linked (GlcNAc...) asparagine" evidence="6">
    <location>
        <position position="293"/>
    </location>
</feature>
<feature type="glycosylation site" description="N-linked (GlcNAc...) asparagine" evidence="6">
    <location>
        <position position="428"/>
    </location>
</feature>
<feature type="glycosylation site" description="N-linked (GlcNAc...) asparagine" evidence="6">
    <location>
        <position position="460"/>
    </location>
</feature>
<feature type="disulfide bond" evidence="1">
    <location>
        <begin position="119"/>
        <end position="523"/>
    </location>
</feature>
<feature type="disulfide bond" evidence="1">
    <location>
        <begin position="123"/>
        <end position="157"/>
    </location>
</feature>
<feature type="disulfide bond" evidence="1">
    <location>
        <begin position="183"/>
        <end position="194"/>
    </location>
</feature>
<feature type="disulfide bond" evidence="1">
    <location>
        <begin position="407"/>
        <end position="449"/>
    </location>
</feature>
<comment type="function">
    <text evidence="3 5">Removes sulfate groups from chondroitin-4-sulfate (C4S) and regulates its degradation (By similarity). Involved in the regulation of cell adhesion, cell migration and invasion in colonic epithelium (By similarity). In the central nervous system, is a regulator of neurite outgrowth and neuronal plasticity, acting through the control of sulfate glycosaminoglycans and neurocan levels (By similarity).</text>
</comment>
<comment type="catalytic activity">
    <reaction>
        <text>Hydrolysis of the 4-sulfate groups of the N-acetyl-D-galactosamine 4-sulfate units of chondroitin sulfate and dermatan sulfate.</text>
        <dbReference type="EC" id="3.1.6.12"/>
    </reaction>
</comment>
<comment type="cofactor">
    <cofactor evidence="1">
        <name>Ca(2+)</name>
        <dbReference type="ChEBI" id="CHEBI:29108"/>
    </cofactor>
    <text evidence="1">Binds 1 Ca(2+) ion per subunit.</text>
</comment>
<comment type="activity regulation">
    <text evidence="5">Inhibited by ethanol (By similarity).</text>
</comment>
<comment type="subunit">
    <text>Homodimer.</text>
</comment>
<comment type="subcellular location">
    <subcellularLocation>
        <location>Lysosome</location>
    </subcellularLocation>
    <subcellularLocation>
        <location evidence="4">Cell surface</location>
    </subcellularLocation>
</comment>
<comment type="PTM">
    <text evidence="1">The conversion to 3-oxoalanine (also known as C-formylglycine, FGly), of a serine or cysteine residue in prokaryotes and of a cysteine residue in eukaryotes, is critical for catalytic activity.</text>
</comment>
<comment type="disease">
    <text evidence="7">Defects in ARSB are the cause of mucopolysaccharidosis type VI (MPS-VI). MPS-VI has been described in Siamese cats (PubMed:6794375).</text>
</comment>
<comment type="similarity">
    <text evidence="8">Belongs to the sulfatase family.</text>
</comment>
<sequence>MGRRGAASLPRGPSPRRPLLPGVLPLLLRLLLLPSRPGAGAGADRPPHLVFVLADDLGWNDVSFHGSNIRTPHLDELAAGGVLLDNYYTQPLCTPSRSQLLTGRYQIHTGLQHQIIWPCQPSCVPLDEKLLPQLLKEAGYTTHMVGKWHLGMYRKECLPTRRGFDTYFGYLLGSEDYYSHERCALIDSLNVTRCALDFRDGEQVATGYKNMYSTNIFTERATALITSHPPEKPLFLYLALQSVHEPLQVPEEYLKPYDFIQDKNRHYYAGMVSLMDEAVGNVTAALKSHGLWNNTVFIFSTDNGGQTLAGGNNWPLRGRKWSLWEGGIRGVGFVASPLLKQKGVKNRELIHISDWLPTLVKLARGSTKGTKPLDGFDVWKTISEGSPSPRKELLHNIDPNFVDISPCPGKSLAPAKDDSSHPAYLAFNTSLHAAIRHGNWKLLTGYPGCGCWFPPPSPYNDSAIPSSDPPTKTLWPFDIDQDPEERHDLSRDYPHIVEQLLSRLQFYHKHSVPVHFPAQDPRCDPKGTGAWGPWV</sequence>
<gene>
    <name type="primary">ARSB</name>
</gene>
<organism>
    <name type="scientific">Felis catus</name>
    <name type="common">Cat</name>
    <name type="synonym">Felis silvestris catus</name>
    <dbReference type="NCBI Taxonomy" id="9685"/>
    <lineage>
        <taxon>Eukaryota</taxon>
        <taxon>Metazoa</taxon>
        <taxon>Chordata</taxon>
        <taxon>Craniata</taxon>
        <taxon>Vertebrata</taxon>
        <taxon>Euteleostomi</taxon>
        <taxon>Mammalia</taxon>
        <taxon>Eutheria</taxon>
        <taxon>Laurasiatheria</taxon>
        <taxon>Carnivora</taxon>
        <taxon>Feliformia</taxon>
        <taxon>Felidae</taxon>
        <taxon>Felinae</taxon>
        <taxon>Felis</taxon>
    </lineage>
</organism>
<protein>
    <recommendedName>
        <fullName>Arylsulfatase B</fullName>
        <shortName>ASB</shortName>
        <ecNumber>3.1.6.12</ecNumber>
    </recommendedName>
    <alternativeName>
        <fullName>N-acetylgalactosamine-4-sulfatase</fullName>
        <shortName>G4S</shortName>
    </alternativeName>
</protein>
<name>ARSB_FELCA</name>
<proteinExistence type="evidence at transcript level"/>
<evidence type="ECO:0000250" key="1"/>
<evidence type="ECO:0000250" key="2">
    <source>
        <dbReference type="UniProtKB" id="P15289"/>
    </source>
</evidence>
<evidence type="ECO:0000250" key="3">
    <source>
        <dbReference type="UniProtKB" id="P15848"/>
    </source>
</evidence>
<evidence type="ECO:0000250" key="4">
    <source>
        <dbReference type="UniProtKB" id="P50429"/>
    </source>
</evidence>
<evidence type="ECO:0000250" key="5">
    <source>
        <dbReference type="UniProtKB" id="P50430"/>
    </source>
</evidence>
<evidence type="ECO:0000255" key="6"/>
<evidence type="ECO:0000269" key="7">
    <source>
    </source>
</evidence>
<evidence type="ECO:0000305" key="8"/>
<keyword id="KW-0106">Calcium</keyword>
<keyword id="KW-1015">Disulfide bond</keyword>
<keyword id="KW-0325">Glycoprotein</keyword>
<keyword id="KW-0378">Hydrolase</keyword>
<keyword id="KW-0458">Lysosome</keyword>
<keyword id="KW-0479">Metal-binding</keyword>
<keyword id="KW-0510">Mucopolysaccharidosis</keyword>
<keyword id="KW-1185">Reference proteome</keyword>
<keyword id="KW-0732">Signal</keyword>
<dbReference type="EC" id="3.1.6.12"/>
<dbReference type="EMBL" id="S48472">
    <property type="protein sequence ID" value="AAB23941.1"/>
    <property type="molecule type" value="mRNA"/>
</dbReference>
<dbReference type="PIR" id="A44475">
    <property type="entry name" value="A44475"/>
</dbReference>
<dbReference type="RefSeq" id="NP_001135731.1">
    <property type="nucleotide sequence ID" value="NM_001142259.1"/>
</dbReference>
<dbReference type="SMR" id="P33727"/>
<dbReference type="FunCoup" id="P33727">
    <property type="interactions" value="23"/>
</dbReference>
<dbReference type="STRING" id="9685.ENSFCAP00000054046"/>
<dbReference type="GlyCosmos" id="P33727">
    <property type="glycosylation" value="5 sites, No reported glycans"/>
</dbReference>
<dbReference type="PaxDb" id="9685-ENSFCAP00000021800"/>
<dbReference type="GeneID" id="100216331"/>
<dbReference type="KEGG" id="fca:100216331"/>
<dbReference type="CTD" id="411"/>
<dbReference type="eggNOG" id="KOG3867">
    <property type="taxonomic scope" value="Eukaryota"/>
</dbReference>
<dbReference type="InParanoid" id="P33727"/>
<dbReference type="OrthoDB" id="103349at2759"/>
<dbReference type="Proteomes" id="UP000011712">
    <property type="component" value="Unplaced"/>
</dbReference>
<dbReference type="GO" id="GO:0009986">
    <property type="term" value="C:cell surface"/>
    <property type="evidence" value="ECO:0000250"/>
    <property type="project" value="UniProtKB"/>
</dbReference>
<dbReference type="GO" id="GO:0005764">
    <property type="term" value="C:lysosome"/>
    <property type="evidence" value="ECO:0007669"/>
    <property type="project" value="UniProtKB-SubCell"/>
</dbReference>
<dbReference type="GO" id="GO:0046872">
    <property type="term" value="F:metal ion binding"/>
    <property type="evidence" value="ECO:0007669"/>
    <property type="project" value="UniProtKB-KW"/>
</dbReference>
<dbReference type="GO" id="GO:0003943">
    <property type="term" value="F:N-acetylgalactosamine-4-sulfatase activity"/>
    <property type="evidence" value="ECO:0000250"/>
    <property type="project" value="UniProtKB"/>
</dbReference>
<dbReference type="GO" id="GO:0061580">
    <property type="term" value="P:colon epithelial cell migration"/>
    <property type="evidence" value="ECO:0000250"/>
    <property type="project" value="UniProtKB"/>
</dbReference>
<dbReference type="GO" id="GO:0010976">
    <property type="term" value="P:positive regulation of neuron projection development"/>
    <property type="evidence" value="ECO:0000250"/>
    <property type="project" value="UniProtKB"/>
</dbReference>
<dbReference type="GO" id="GO:0010632">
    <property type="term" value="P:regulation of epithelial cell migration"/>
    <property type="evidence" value="ECO:0000250"/>
    <property type="project" value="UniProtKB"/>
</dbReference>
<dbReference type="CDD" id="cd16029">
    <property type="entry name" value="4-S"/>
    <property type="match status" value="1"/>
</dbReference>
<dbReference type="FunFam" id="3.40.720.10:FF:000007">
    <property type="entry name" value="Arylsulfatase family, member J"/>
    <property type="match status" value="1"/>
</dbReference>
<dbReference type="Gene3D" id="3.30.1120.10">
    <property type="match status" value="1"/>
</dbReference>
<dbReference type="Gene3D" id="3.40.720.10">
    <property type="entry name" value="Alkaline Phosphatase, subunit A"/>
    <property type="match status" value="1"/>
</dbReference>
<dbReference type="InterPro" id="IPR017850">
    <property type="entry name" value="Alkaline_phosphatase_core_sf"/>
</dbReference>
<dbReference type="InterPro" id="IPR047115">
    <property type="entry name" value="ARSB"/>
</dbReference>
<dbReference type="InterPro" id="IPR024607">
    <property type="entry name" value="Sulfatase_CS"/>
</dbReference>
<dbReference type="InterPro" id="IPR000917">
    <property type="entry name" value="Sulfatase_N"/>
</dbReference>
<dbReference type="PANTHER" id="PTHR10342">
    <property type="entry name" value="ARYLSULFATASE"/>
    <property type="match status" value="1"/>
</dbReference>
<dbReference type="PANTHER" id="PTHR10342:SF274">
    <property type="entry name" value="ARYLSULFATASE B"/>
    <property type="match status" value="1"/>
</dbReference>
<dbReference type="Pfam" id="PF00884">
    <property type="entry name" value="Sulfatase"/>
    <property type="match status" value="1"/>
</dbReference>
<dbReference type="SUPFAM" id="SSF53649">
    <property type="entry name" value="Alkaline phosphatase-like"/>
    <property type="match status" value="1"/>
</dbReference>
<dbReference type="PROSITE" id="PS00523">
    <property type="entry name" value="SULFATASE_1"/>
    <property type="match status" value="1"/>
</dbReference>
<dbReference type="PROSITE" id="PS00149">
    <property type="entry name" value="SULFATASE_2"/>
    <property type="match status" value="1"/>
</dbReference>
<reference key="1">
    <citation type="journal article" date="1992" name="Genomics">
        <title>Feline arylsulfatase B (ARSB): isolation and expression of the cDNA, comparison with human ARSB, and gene localization to feline chromosome A1.</title>
        <authorList>
            <person name="Jackson C.E."/>
            <person name="Yuhki N."/>
            <person name="Desnick R.J."/>
            <person name="Haskins M.E."/>
            <person name="O'Brien S.J."/>
            <person name="Schuchman E.H."/>
        </authorList>
    </citation>
    <scope>NUCLEOTIDE SEQUENCE [MRNA]</scope>
    <source>
        <tissue>Liver</tissue>
    </source>
</reference>
<reference key="2">
    <citation type="journal article" date="1981" name="Am. J. Pathol.">
        <title>Animal model of human disease: Mucopolysaccharidosis VI Maroteaux-Lamy syndrome, Arylsulfatase B-deficient mucopolysaccharidosis in the Siamese cat.</title>
        <authorList>
            <person name="Haskins M.E."/>
            <person name="Jezyk P.F."/>
            <person name="Desnick R.J."/>
            <person name="Patterson D.F."/>
        </authorList>
    </citation>
    <scope>DISEASE</scope>
</reference>